<gene>
    <name evidence="1" type="primary">betB</name>
    <name type="ordered locus">KPK_3994</name>
</gene>
<protein>
    <recommendedName>
        <fullName evidence="1">Betaine aldehyde dehydrogenase</fullName>
        <shortName evidence="1">BADH</shortName>
        <ecNumber evidence="1">1.2.1.8</ecNumber>
    </recommendedName>
</protein>
<sequence>MSRMAEQQLYINGGYTSATSGRTFETINPATGEVLATVQAAGREDVDRAVESAQRGQKIWAAMTAMERSRILRRAVDLLRQRNDELARLETLDTGKPLSETAAVDIVTGADVLEYYAGLIPALEGSQIPLRDSSFVYTRREPLGVVAGIGAWNYPIQIALWKSAPALAAGNAMIFKPSEVTPLTALKLAEIYSEAGLPDGVFNVLPGIGAETGQYLTEHPGIAKISFTGGVASGKKVMANSAASSLKEVTMELGGKSPLIIADDADLDLAADIAMMANFYSSGQVCTNGTRVFVPAKQKAEFEHKILERVGRIRPGDLFADDTNFGPLVSFPHRDNVLRYIESGKREGARLLCGGEALKGDGFDNGAWVAPTVFTDCSDEMTIVREEIFGPVMSILSYTDEAEVIRRANATEYGLAAGVVTPNLNRAHRLIHQLEAGICWINSWGESPAEMPVGGYKHSGIGRENGVMTLQSYTQVKSIQVEMGKFQSIF</sequence>
<keyword id="KW-0479">Metal-binding</keyword>
<keyword id="KW-0520">NAD</keyword>
<keyword id="KW-0521">NADP</keyword>
<keyword id="KW-0558">Oxidation</keyword>
<keyword id="KW-0560">Oxidoreductase</keyword>
<keyword id="KW-0630">Potassium</keyword>
<name>BETB_KLEP3</name>
<proteinExistence type="inferred from homology"/>
<reference key="1">
    <citation type="journal article" date="2008" name="PLoS Genet.">
        <title>Complete genome sequence of the N2-fixing broad host range endophyte Klebsiella pneumoniae 342 and virulence predictions verified in mice.</title>
        <authorList>
            <person name="Fouts D.E."/>
            <person name="Tyler H.L."/>
            <person name="DeBoy R.T."/>
            <person name="Daugherty S."/>
            <person name="Ren Q."/>
            <person name="Badger J.H."/>
            <person name="Durkin A.S."/>
            <person name="Huot H."/>
            <person name="Shrivastava S."/>
            <person name="Kothari S."/>
            <person name="Dodson R.J."/>
            <person name="Mohamoud Y."/>
            <person name="Khouri H."/>
            <person name="Roesch L.F.W."/>
            <person name="Krogfelt K.A."/>
            <person name="Struve C."/>
            <person name="Triplett E.W."/>
            <person name="Methe B.A."/>
        </authorList>
    </citation>
    <scope>NUCLEOTIDE SEQUENCE [LARGE SCALE GENOMIC DNA]</scope>
    <source>
        <strain>342</strain>
    </source>
</reference>
<dbReference type="EC" id="1.2.1.8" evidence="1"/>
<dbReference type="EMBL" id="CP000964">
    <property type="protein sequence ID" value="ACI10905.1"/>
    <property type="molecule type" value="Genomic_DNA"/>
</dbReference>
<dbReference type="SMR" id="B5Y007"/>
<dbReference type="KEGG" id="kpe:KPK_3994"/>
<dbReference type="HOGENOM" id="CLU_005391_0_0_6"/>
<dbReference type="UniPathway" id="UPA00529">
    <property type="reaction ID" value="UER00386"/>
</dbReference>
<dbReference type="Proteomes" id="UP000001734">
    <property type="component" value="Chromosome"/>
</dbReference>
<dbReference type="GO" id="GO:0008802">
    <property type="term" value="F:betaine-aldehyde dehydrogenase (NAD+) activity"/>
    <property type="evidence" value="ECO:0007669"/>
    <property type="project" value="UniProtKB-UniRule"/>
</dbReference>
<dbReference type="GO" id="GO:0046872">
    <property type="term" value="F:metal ion binding"/>
    <property type="evidence" value="ECO:0007669"/>
    <property type="project" value="UniProtKB-KW"/>
</dbReference>
<dbReference type="GO" id="GO:0019285">
    <property type="term" value="P:glycine betaine biosynthetic process from choline"/>
    <property type="evidence" value="ECO:0007669"/>
    <property type="project" value="UniProtKB-UniRule"/>
</dbReference>
<dbReference type="CDD" id="cd07090">
    <property type="entry name" value="ALDH_F9_TMBADH"/>
    <property type="match status" value="1"/>
</dbReference>
<dbReference type="FunFam" id="3.40.309.10:FF:000014">
    <property type="entry name" value="NAD/NADP-dependent betaine aldehyde dehydrogenase"/>
    <property type="match status" value="1"/>
</dbReference>
<dbReference type="FunFam" id="3.40.605.10:FF:000007">
    <property type="entry name" value="NAD/NADP-dependent betaine aldehyde dehydrogenase"/>
    <property type="match status" value="1"/>
</dbReference>
<dbReference type="Gene3D" id="3.40.605.10">
    <property type="entry name" value="Aldehyde Dehydrogenase, Chain A, domain 1"/>
    <property type="match status" value="1"/>
</dbReference>
<dbReference type="Gene3D" id="3.40.309.10">
    <property type="entry name" value="Aldehyde Dehydrogenase, Chain A, domain 2"/>
    <property type="match status" value="1"/>
</dbReference>
<dbReference type="HAMAP" id="MF_00804">
    <property type="entry name" value="BADH"/>
    <property type="match status" value="1"/>
</dbReference>
<dbReference type="InterPro" id="IPR016161">
    <property type="entry name" value="Ald_DH/histidinol_DH"/>
</dbReference>
<dbReference type="InterPro" id="IPR016163">
    <property type="entry name" value="Ald_DH_C"/>
</dbReference>
<dbReference type="InterPro" id="IPR016160">
    <property type="entry name" value="Ald_DH_CS_CYS"/>
</dbReference>
<dbReference type="InterPro" id="IPR029510">
    <property type="entry name" value="Ald_DH_CS_GLU"/>
</dbReference>
<dbReference type="InterPro" id="IPR016162">
    <property type="entry name" value="Ald_DH_N"/>
</dbReference>
<dbReference type="InterPro" id="IPR015590">
    <property type="entry name" value="Aldehyde_DH_dom"/>
</dbReference>
<dbReference type="InterPro" id="IPR011264">
    <property type="entry name" value="BADH"/>
</dbReference>
<dbReference type="NCBIfam" id="TIGR01804">
    <property type="entry name" value="BADH"/>
    <property type="match status" value="1"/>
</dbReference>
<dbReference type="NCBIfam" id="NF009725">
    <property type="entry name" value="PRK13252.1"/>
    <property type="match status" value="1"/>
</dbReference>
<dbReference type="PANTHER" id="PTHR11699">
    <property type="entry name" value="ALDEHYDE DEHYDROGENASE-RELATED"/>
    <property type="match status" value="1"/>
</dbReference>
<dbReference type="Pfam" id="PF00171">
    <property type="entry name" value="Aldedh"/>
    <property type="match status" value="1"/>
</dbReference>
<dbReference type="SUPFAM" id="SSF53720">
    <property type="entry name" value="ALDH-like"/>
    <property type="match status" value="1"/>
</dbReference>
<dbReference type="PROSITE" id="PS00070">
    <property type="entry name" value="ALDEHYDE_DEHYDR_CYS"/>
    <property type="match status" value="1"/>
</dbReference>
<dbReference type="PROSITE" id="PS00687">
    <property type="entry name" value="ALDEHYDE_DEHYDR_GLU"/>
    <property type="match status" value="1"/>
</dbReference>
<organism>
    <name type="scientific">Klebsiella pneumoniae (strain 342)</name>
    <dbReference type="NCBI Taxonomy" id="507522"/>
    <lineage>
        <taxon>Bacteria</taxon>
        <taxon>Pseudomonadati</taxon>
        <taxon>Pseudomonadota</taxon>
        <taxon>Gammaproteobacteria</taxon>
        <taxon>Enterobacterales</taxon>
        <taxon>Enterobacteriaceae</taxon>
        <taxon>Klebsiella/Raoultella group</taxon>
        <taxon>Klebsiella</taxon>
        <taxon>Klebsiella pneumoniae complex</taxon>
    </lineage>
</organism>
<evidence type="ECO:0000255" key="1">
    <source>
        <dbReference type="HAMAP-Rule" id="MF_00804"/>
    </source>
</evidence>
<comment type="function">
    <text evidence="1">Involved in the biosynthesis of the osmoprotectant glycine betaine. Catalyzes the irreversible oxidation of betaine aldehyde to the corresponding acid.</text>
</comment>
<comment type="catalytic activity">
    <reaction evidence="1">
        <text>betaine aldehyde + NAD(+) + H2O = glycine betaine + NADH + 2 H(+)</text>
        <dbReference type="Rhea" id="RHEA:15305"/>
        <dbReference type="ChEBI" id="CHEBI:15377"/>
        <dbReference type="ChEBI" id="CHEBI:15378"/>
        <dbReference type="ChEBI" id="CHEBI:15710"/>
        <dbReference type="ChEBI" id="CHEBI:17750"/>
        <dbReference type="ChEBI" id="CHEBI:57540"/>
        <dbReference type="ChEBI" id="CHEBI:57945"/>
        <dbReference type="EC" id="1.2.1.8"/>
    </reaction>
    <physiologicalReaction direction="left-to-right" evidence="1">
        <dbReference type="Rhea" id="RHEA:15306"/>
    </physiologicalReaction>
</comment>
<comment type="cofactor">
    <cofactor evidence="1">
        <name>K(+)</name>
        <dbReference type="ChEBI" id="CHEBI:29103"/>
    </cofactor>
    <text evidence="1">Binds 2 potassium ions per subunit.</text>
</comment>
<comment type="pathway">
    <text evidence="1">Amine and polyamine biosynthesis; betaine biosynthesis via choline pathway; betaine from betaine aldehyde: step 1/1.</text>
</comment>
<comment type="subunit">
    <text evidence="1">Dimer of dimers.</text>
</comment>
<comment type="similarity">
    <text evidence="1">Belongs to the aldehyde dehydrogenase family.</text>
</comment>
<feature type="chain" id="PRO_1000133954" description="Betaine aldehyde dehydrogenase">
    <location>
        <begin position="1"/>
        <end position="490"/>
    </location>
</feature>
<feature type="active site" description="Charge relay system" evidence="1">
    <location>
        <position position="162"/>
    </location>
</feature>
<feature type="active site" description="Proton acceptor" evidence="1">
    <location>
        <position position="252"/>
    </location>
</feature>
<feature type="active site" description="Nucleophile" evidence="1">
    <location>
        <position position="286"/>
    </location>
</feature>
<feature type="active site" description="Charge relay system" evidence="1">
    <location>
        <position position="464"/>
    </location>
</feature>
<feature type="binding site" evidence="1">
    <location>
        <position position="26"/>
    </location>
    <ligand>
        <name>K(+)</name>
        <dbReference type="ChEBI" id="CHEBI:29103"/>
        <label>1</label>
    </ligand>
</feature>
<feature type="binding site" evidence="1">
    <location>
        <position position="27"/>
    </location>
    <ligand>
        <name>K(+)</name>
        <dbReference type="ChEBI" id="CHEBI:29103"/>
        <label>1</label>
    </ligand>
</feature>
<feature type="binding site" evidence="1">
    <location>
        <position position="93"/>
    </location>
    <ligand>
        <name>K(+)</name>
        <dbReference type="ChEBI" id="CHEBI:29103"/>
        <label>1</label>
    </ligand>
</feature>
<feature type="binding site" evidence="1">
    <location>
        <begin position="150"/>
        <end position="152"/>
    </location>
    <ligand>
        <name>NAD(+)</name>
        <dbReference type="ChEBI" id="CHEBI:57540"/>
    </ligand>
</feature>
<feature type="binding site" evidence="1">
    <location>
        <begin position="176"/>
        <end position="179"/>
    </location>
    <ligand>
        <name>NAD(+)</name>
        <dbReference type="ChEBI" id="CHEBI:57540"/>
    </ligand>
</feature>
<feature type="binding site" evidence="1">
    <location>
        <position position="180"/>
    </location>
    <ligand>
        <name>K(+)</name>
        <dbReference type="ChEBI" id="CHEBI:29103"/>
        <label>1</label>
    </ligand>
</feature>
<feature type="binding site" evidence="1">
    <location>
        <begin position="230"/>
        <end position="233"/>
    </location>
    <ligand>
        <name>NAD(+)</name>
        <dbReference type="ChEBI" id="CHEBI:57540"/>
    </ligand>
</feature>
<feature type="binding site" evidence="1">
    <location>
        <position position="246"/>
    </location>
    <ligand>
        <name>K(+)</name>
        <dbReference type="ChEBI" id="CHEBI:29103"/>
        <label>2</label>
    </ligand>
</feature>
<feature type="binding site" evidence="1">
    <location>
        <position position="254"/>
    </location>
    <ligand>
        <name>NAD(+)</name>
        <dbReference type="ChEBI" id="CHEBI:57540"/>
    </ligand>
</feature>
<feature type="binding site" description="covalent" evidence="1">
    <location>
        <position position="286"/>
    </location>
    <ligand>
        <name>NAD(+)</name>
        <dbReference type="ChEBI" id="CHEBI:57540"/>
    </ligand>
</feature>
<feature type="binding site" evidence="1">
    <location>
        <position position="387"/>
    </location>
    <ligand>
        <name>NAD(+)</name>
        <dbReference type="ChEBI" id="CHEBI:57540"/>
    </ligand>
</feature>
<feature type="binding site" evidence="1">
    <location>
        <position position="457"/>
    </location>
    <ligand>
        <name>K(+)</name>
        <dbReference type="ChEBI" id="CHEBI:29103"/>
        <label>2</label>
    </ligand>
</feature>
<feature type="binding site" evidence="1">
    <location>
        <position position="460"/>
    </location>
    <ligand>
        <name>K(+)</name>
        <dbReference type="ChEBI" id="CHEBI:29103"/>
        <label>2</label>
    </ligand>
</feature>
<feature type="site" description="Seems to be a necessary countercharge to the potassium cations" evidence="1">
    <location>
        <position position="248"/>
    </location>
</feature>
<feature type="modified residue" description="Cysteine sulfenic acid (-SOH)" evidence="1">
    <location>
        <position position="286"/>
    </location>
</feature>
<accession>B5Y007</accession>